<dbReference type="EMBL" id="AF080560">
    <property type="protein sequence ID" value="AAC69864.1"/>
    <property type="molecule type" value="Genomic_DNA"/>
</dbReference>
<dbReference type="Proteomes" id="UP000007454">
    <property type="component" value="Genome"/>
</dbReference>
<evidence type="ECO:0000256" key="1">
    <source>
        <dbReference type="SAM" id="MobiDB-lite"/>
    </source>
</evidence>
<gene>
    <name type="ORF">ORF4</name>
</gene>
<reference key="1">
    <citation type="journal article" date="1998" name="Virology">
        <title>Psittacine beak and feather disease virus nucleotide sequence analysis and its relationship to porcine circovirus, plant circoviruses, and chicken anaemia virus.</title>
        <authorList>
            <person name="Bassami M.R."/>
            <person name="Berryman D."/>
            <person name="Wilcox G.E."/>
            <person name="Raidal S.R."/>
        </authorList>
    </citation>
    <scope>NUCLEOTIDE SEQUENCE [GENOMIC DNA]</scope>
</reference>
<proteinExistence type="predicted"/>
<name>ORF4_BFDV</name>
<accession>Q9YUC9</accession>
<sequence length="106" mass="11344">MPQGGTPCRRARRAVRPERPTSPEGVFCVGGGAPGGPPDTTNTVSAEGANKHSKRYLLSESLLSAGIVRGKLTELNIQSELGHISDRLFWLGEAECNAVVPDFRSR</sequence>
<organismHost>
    <name type="scientific">Gracula</name>
    <dbReference type="NCBI Taxonomy" id="116991"/>
</organismHost>
<organismHost>
    <name type="scientific">Psittaciformes</name>
    <dbReference type="NCBI Taxonomy" id="9223"/>
</organismHost>
<feature type="chain" id="PRO_0000319853" description="Uncharacterized protein ORF4">
    <location>
        <begin position="1"/>
        <end position="106"/>
    </location>
</feature>
<feature type="region of interest" description="Disordered" evidence="1">
    <location>
        <begin position="1"/>
        <end position="46"/>
    </location>
</feature>
<protein>
    <recommendedName>
        <fullName>Uncharacterized protein ORF4</fullName>
    </recommendedName>
</protein>
<keyword id="KW-1185">Reference proteome</keyword>
<organism>
    <name type="scientific">Beak and feather disease virus</name>
    <name type="common">BFDV</name>
    <dbReference type="NCBI Taxonomy" id="77856"/>
    <lineage>
        <taxon>Viruses</taxon>
        <taxon>Monodnaviria</taxon>
        <taxon>Shotokuvirae</taxon>
        <taxon>Cressdnaviricota</taxon>
        <taxon>Arfiviricetes</taxon>
        <taxon>Cirlivirales</taxon>
        <taxon>Circoviridae</taxon>
        <taxon>Circovirus</taxon>
        <taxon>Circovirus parrot</taxon>
    </lineage>
</organism>